<gene>
    <name evidence="6" type="ordered locus">At4g19520</name>
    <name evidence="7" type="ORF">F24J7.80</name>
</gene>
<protein>
    <recommendedName>
        <fullName evidence="5">Probable disease resistance protein At4g19520</fullName>
        <ecNumber evidence="2">3.2.2.6</ecNumber>
    </recommendedName>
</protein>
<dbReference type="EC" id="3.2.2.6" evidence="2"/>
<dbReference type="EMBL" id="AL021768">
    <property type="protein sequence ID" value="CAA16929.1"/>
    <property type="status" value="ALT_SEQ"/>
    <property type="molecule type" value="Genomic_DNA"/>
</dbReference>
<dbReference type="EMBL" id="AL161551">
    <property type="protein sequence ID" value="CAB78954.1"/>
    <property type="status" value="ALT_SEQ"/>
    <property type="molecule type" value="Genomic_DNA"/>
</dbReference>
<dbReference type="EMBL" id="CP002687">
    <property type="protein sequence ID" value="AEE84194.1"/>
    <property type="molecule type" value="Genomic_DNA"/>
</dbReference>
<dbReference type="PIR" id="T06145">
    <property type="entry name" value="T06145"/>
</dbReference>
<dbReference type="RefSeq" id="NP_193687.3">
    <property type="nucleotide sequence ID" value="NM_118072.4"/>
</dbReference>
<dbReference type="SMR" id="F4JT82"/>
<dbReference type="FunCoup" id="F4JT82">
    <property type="interactions" value="2"/>
</dbReference>
<dbReference type="STRING" id="3702.F4JT82"/>
<dbReference type="iPTMnet" id="F4JT82"/>
<dbReference type="PaxDb" id="3702-AT4G19520.1"/>
<dbReference type="ProteomicsDB" id="228222"/>
<dbReference type="EnsemblPlants" id="AT4G19520.1">
    <property type="protein sequence ID" value="AT4G19520.1"/>
    <property type="gene ID" value="AT4G19520"/>
</dbReference>
<dbReference type="GeneID" id="827694"/>
<dbReference type="Gramene" id="AT4G19520.1">
    <property type="protein sequence ID" value="AT4G19520.1"/>
    <property type="gene ID" value="AT4G19520"/>
</dbReference>
<dbReference type="KEGG" id="ath:AT4G19520"/>
<dbReference type="Araport" id="AT4G19520"/>
<dbReference type="TAIR" id="AT4G19520"/>
<dbReference type="HOGENOM" id="CLU_001561_0_3_1"/>
<dbReference type="InParanoid" id="F4JT82"/>
<dbReference type="PRO" id="PR:F4JT82"/>
<dbReference type="Proteomes" id="UP000006548">
    <property type="component" value="Chromosome 4"/>
</dbReference>
<dbReference type="ExpressionAtlas" id="F4JT82">
    <property type="expression patterns" value="baseline and differential"/>
</dbReference>
<dbReference type="GO" id="GO:0043531">
    <property type="term" value="F:ADP binding"/>
    <property type="evidence" value="ECO:0007669"/>
    <property type="project" value="InterPro"/>
</dbReference>
<dbReference type="GO" id="GO:0005524">
    <property type="term" value="F:ATP binding"/>
    <property type="evidence" value="ECO:0007669"/>
    <property type="project" value="UniProtKB-KW"/>
</dbReference>
<dbReference type="GO" id="GO:0061809">
    <property type="term" value="F:NAD+ nucleosidase activity, cyclic ADP-ribose generating"/>
    <property type="evidence" value="ECO:0007669"/>
    <property type="project" value="UniProtKB-EC"/>
</dbReference>
<dbReference type="GO" id="GO:0071456">
    <property type="term" value="P:cellular response to hypoxia"/>
    <property type="evidence" value="ECO:0000270"/>
    <property type="project" value="TAIR"/>
</dbReference>
<dbReference type="GO" id="GO:0006952">
    <property type="term" value="P:defense response"/>
    <property type="evidence" value="ECO:0007669"/>
    <property type="project" value="UniProtKB-KW"/>
</dbReference>
<dbReference type="GO" id="GO:0007165">
    <property type="term" value="P:signal transduction"/>
    <property type="evidence" value="ECO:0007669"/>
    <property type="project" value="InterPro"/>
</dbReference>
<dbReference type="FunFam" id="1.10.8.430:FF:000004">
    <property type="entry name" value="Disease resistance protein (TIR-NBS-LRR class)"/>
    <property type="match status" value="1"/>
</dbReference>
<dbReference type="FunFam" id="3.40.50.10140:FF:000007">
    <property type="entry name" value="Disease resistance protein (TIR-NBS-LRR class)"/>
    <property type="match status" value="1"/>
</dbReference>
<dbReference type="FunFam" id="3.40.50.10140:FF:000025">
    <property type="entry name" value="Disease resistance protein (TIR-NBS-LRR class)"/>
    <property type="match status" value="1"/>
</dbReference>
<dbReference type="FunFam" id="3.80.10.10:FF:000921">
    <property type="entry name" value="Disease resistance protein (TIR-NBS-LRR class) family"/>
    <property type="match status" value="1"/>
</dbReference>
<dbReference type="FunFam" id="3.80.10.10:FF:001572">
    <property type="entry name" value="Disease resistance protein (TIR-NBS-LRR class) family"/>
    <property type="match status" value="1"/>
</dbReference>
<dbReference type="Gene3D" id="1.10.8.430">
    <property type="entry name" value="Helical domain of apoptotic protease-activating factors"/>
    <property type="match status" value="1"/>
</dbReference>
<dbReference type="Gene3D" id="3.40.50.300">
    <property type="entry name" value="P-loop containing nucleotide triphosphate hydrolases"/>
    <property type="match status" value="1"/>
</dbReference>
<dbReference type="Gene3D" id="3.80.10.10">
    <property type="entry name" value="Ribonuclease Inhibitor"/>
    <property type="match status" value="3"/>
</dbReference>
<dbReference type="Gene3D" id="3.40.50.10140">
    <property type="entry name" value="Toll/interleukin-1 receptor homology (TIR) domain"/>
    <property type="match status" value="2"/>
</dbReference>
<dbReference type="InterPro" id="IPR042197">
    <property type="entry name" value="Apaf_helical"/>
</dbReference>
<dbReference type="InterPro" id="IPR044974">
    <property type="entry name" value="Disease_R_plants"/>
</dbReference>
<dbReference type="InterPro" id="IPR011713">
    <property type="entry name" value="Leu-rich_rpt_3"/>
</dbReference>
<dbReference type="InterPro" id="IPR032675">
    <property type="entry name" value="LRR_dom_sf"/>
</dbReference>
<dbReference type="InterPro" id="IPR002182">
    <property type="entry name" value="NB-ARC"/>
</dbReference>
<dbReference type="InterPro" id="IPR027417">
    <property type="entry name" value="P-loop_NTPase"/>
</dbReference>
<dbReference type="InterPro" id="IPR000157">
    <property type="entry name" value="TIR_dom"/>
</dbReference>
<dbReference type="InterPro" id="IPR035897">
    <property type="entry name" value="Toll_tir_struct_dom_sf"/>
</dbReference>
<dbReference type="InterPro" id="IPR036390">
    <property type="entry name" value="WH_DNA-bd_sf"/>
</dbReference>
<dbReference type="PANTHER" id="PTHR11017:SF518">
    <property type="entry name" value="DISEASE RESISTANCE PROTEIN (TIR-NBS-LRR CLASS)-RELATED"/>
    <property type="match status" value="1"/>
</dbReference>
<dbReference type="PANTHER" id="PTHR11017">
    <property type="entry name" value="LEUCINE-RICH REPEAT-CONTAINING PROTEIN"/>
    <property type="match status" value="1"/>
</dbReference>
<dbReference type="Pfam" id="PF23286">
    <property type="entry name" value="LRR_13"/>
    <property type="match status" value="1"/>
</dbReference>
<dbReference type="Pfam" id="PF07725">
    <property type="entry name" value="LRR_3"/>
    <property type="match status" value="1"/>
</dbReference>
<dbReference type="Pfam" id="PF00931">
    <property type="entry name" value="NB-ARC"/>
    <property type="match status" value="1"/>
</dbReference>
<dbReference type="Pfam" id="PF01582">
    <property type="entry name" value="TIR"/>
    <property type="match status" value="2"/>
</dbReference>
<dbReference type="Pfam" id="PF23282">
    <property type="entry name" value="WHD_ROQ1"/>
    <property type="match status" value="2"/>
</dbReference>
<dbReference type="PRINTS" id="PR00364">
    <property type="entry name" value="DISEASERSIST"/>
</dbReference>
<dbReference type="SMART" id="SM00255">
    <property type="entry name" value="TIR"/>
    <property type="match status" value="2"/>
</dbReference>
<dbReference type="SUPFAM" id="SSF52058">
    <property type="entry name" value="L domain-like"/>
    <property type="match status" value="2"/>
</dbReference>
<dbReference type="SUPFAM" id="SSF52540">
    <property type="entry name" value="P-loop containing nucleoside triphosphate hydrolases"/>
    <property type="match status" value="1"/>
</dbReference>
<dbReference type="SUPFAM" id="SSF52200">
    <property type="entry name" value="Toll/Interleukin receptor TIR domain"/>
    <property type="match status" value="2"/>
</dbReference>
<dbReference type="SUPFAM" id="SSF46785">
    <property type="entry name" value="Winged helix' DNA-binding domain"/>
    <property type="match status" value="1"/>
</dbReference>
<dbReference type="PROSITE" id="PS50104">
    <property type="entry name" value="TIR"/>
    <property type="match status" value="2"/>
</dbReference>
<organism>
    <name type="scientific">Arabidopsis thaliana</name>
    <name type="common">Mouse-ear cress</name>
    <dbReference type="NCBI Taxonomy" id="3702"/>
    <lineage>
        <taxon>Eukaryota</taxon>
        <taxon>Viridiplantae</taxon>
        <taxon>Streptophyta</taxon>
        <taxon>Embryophyta</taxon>
        <taxon>Tracheophyta</taxon>
        <taxon>Spermatophyta</taxon>
        <taxon>Magnoliopsida</taxon>
        <taxon>eudicotyledons</taxon>
        <taxon>Gunneridae</taxon>
        <taxon>Pentapetalae</taxon>
        <taxon>rosids</taxon>
        <taxon>malvids</taxon>
        <taxon>Brassicales</taxon>
        <taxon>Brassicaceae</taxon>
        <taxon>Camelineae</taxon>
        <taxon>Arabidopsis</taxon>
    </lineage>
</organism>
<name>RPP2C_ARATH</name>
<accession>F4JT82</accession>
<accession>O49470</accession>
<comment type="function">
    <text evidence="3">Probable disease resistance protein.</text>
</comment>
<comment type="catalytic activity">
    <reaction evidence="2">
        <text>NAD(+) + H2O = ADP-D-ribose + nicotinamide + H(+)</text>
        <dbReference type="Rhea" id="RHEA:16301"/>
        <dbReference type="ChEBI" id="CHEBI:15377"/>
        <dbReference type="ChEBI" id="CHEBI:15378"/>
        <dbReference type="ChEBI" id="CHEBI:17154"/>
        <dbReference type="ChEBI" id="CHEBI:57540"/>
        <dbReference type="ChEBI" id="CHEBI:57967"/>
        <dbReference type="EC" id="3.2.2.6"/>
    </reaction>
    <physiologicalReaction direction="left-to-right" evidence="2">
        <dbReference type="Rhea" id="RHEA:16302"/>
    </physiologicalReaction>
</comment>
<comment type="domain">
    <text evidence="2">The TIR domain mediates NAD(+) hydrolase (NADase) activity. Self-association of TIR domains is required for NADase activity.</text>
</comment>
<comment type="similarity">
    <text evidence="4">Belongs to the disease resistance TIR-NB-LRR family.</text>
</comment>
<comment type="sequence caution" evidence="4">
    <conflict type="erroneous gene model prediction">
        <sequence resource="EMBL-CDS" id="CAA16929"/>
    </conflict>
</comment>
<comment type="sequence caution" evidence="4">
    <conflict type="erroneous gene model prediction">
        <sequence resource="EMBL-CDS" id="CAB78954"/>
    </conflict>
</comment>
<comment type="online information" name="NIB-LRRS">
    <link uri="http://niblrrs.ucdavis.edu"/>
    <text>Functional and comparative genomics of disease resistance gene homologs</text>
</comment>
<evidence type="ECO:0000255" key="1"/>
<evidence type="ECO:0000255" key="2">
    <source>
        <dbReference type="PROSITE-ProRule" id="PRU00204"/>
    </source>
</evidence>
<evidence type="ECO:0000303" key="3">
    <source>
    </source>
</evidence>
<evidence type="ECO:0000305" key="4"/>
<evidence type="ECO:0000305" key="5">
    <source>
    </source>
</evidence>
<evidence type="ECO:0000312" key="6">
    <source>
        <dbReference type="Araport" id="AT4G19520"/>
    </source>
</evidence>
<evidence type="ECO:0000312" key="7">
    <source>
        <dbReference type="EMBL" id="CAA16929.1"/>
    </source>
</evidence>
<feature type="chain" id="PRO_0000444558" description="Probable disease resistance protein At4g19520">
    <location>
        <begin position="1"/>
        <end position="1744"/>
    </location>
</feature>
<feature type="domain" description="TIR 1" evidence="2">
    <location>
        <begin position="3"/>
        <end position="163"/>
    </location>
</feature>
<feature type="domain" description="NB-ARC" evidence="1">
    <location>
        <begin position="192"/>
        <end position="411"/>
    </location>
</feature>
<feature type="repeat" description="LRR 1" evidence="1">
    <location>
        <begin position="503"/>
        <end position="526"/>
    </location>
</feature>
<feature type="repeat" description="LRR 2" evidence="1">
    <location>
        <begin position="557"/>
        <end position="581"/>
    </location>
</feature>
<feature type="repeat" description="LRR 3" evidence="1">
    <location>
        <begin position="583"/>
        <end position="602"/>
    </location>
</feature>
<feature type="repeat" description="LRR 4" evidence="1">
    <location>
        <begin position="603"/>
        <end position="626"/>
    </location>
</feature>
<feature type="repeat" description="LRR 5" evidence="1">
    <location>
        <begin position="648"/>
        <end position="669"/>
    </location>
</feature>
<feature type="repeat" description="LRR 6" evidence="1">
    <location>
        <begin position="670"/>
        <end position="692"/>
    </location>
</feature>
<feature type="repeat" description="LRR 7" evidence="1">
    <location>
        <begin position="710"/>
        <end position="733"/>
    </location>
</feature>
<feature type="repeat" description="LRR 8" evidence="1">
    <location>
        <begin position="734"/>
        <end position="754"/>
    </location>
</feature>
<feature type="repeat" description="LRR 9" evidence="1">
    <location>
        <begin position="755"/>
        <end position="777"/>
    </location>
</feature>
<feature type="repeat" description="LRR 10" evidence="1">
    <location>
        <begin position="779"/>
        <end position="802"/>
    </location>
</feature>
<feature type="repeat" description="LRR 11" evidence="1">
    <location>
        <begin position="804"/>
        <end position="823"/>
    </location>
</feature>
<feature type="repeat" description="LRR 12" evidence="1">
    <location>
        <begin position="824"/>
        <end position="846"/>
    </location>
</feature>
<feature type="repeat" description="LRR 13" evidence="1">
    <location>
        <begin position="848"/>
        <end position="871"/>
    </location>
</feature>
<feature type="repeat" description="LRR 14" evidence="1">
    <location>
        <begin position="892"/>
        <end position="915"/>
    </location>
</feature>
<feature type="repeat" description="LRR 15" evidence="1">
    <location>
        <begin position="917"/>
        <end position="939"/>
    </location>
</feature>
<feature type="repeat" description="LRR 16" evidence="1">
    <location>
        <begin position="941"/>
        <end position="963"/>
    </location>
</feature>
<feature type="repeat" description="LRR 17" evidence="1">
    <location>
        <begin position="987"/>
        <end position="1010"/>
    </location>
</feature>
<feature type="repeat" description="LRR 18" evidence="1">
    <location>
        <begin position="1011"/>
        <end position="1035"/>
    </location>
</feature>
<feature type="repeat" description="LRR 19" evidence="1">
    <location>
        <begin position="1037"/>
        <end position="1059"/>
    </location>
</feature>
<feature type="repeat" description="LRR 20" evidence="1">
    <location>
        <begin position="1062"/>
        <end position="1086"/>
    </location>
</feature>
<feature type="domain" description="TIR 2" evidence="2">
    <location>
        <begin position="1399"/>
        <end position="1559"/>
    </location>
</feature>
<feature type="active site" evidence="2">
    <location>
        <position position="80"/>
    </location>
</feature>
<keyword id="KW-0067">ATP-binding</keyword>
<keyword id="KW-0378">Hydrolase</keyword>
<keyword id="KW-0433">Leucine-rich repeat</keyword>
<keyword id="KW-0520">NAD</keyword>
<keyword id="KW-0547">Nucleotide-binding</keyword>
<keyword id="KW-0611">Plant defense</keyword>
<keyword id="KW-1185">Reference proteome</keyword>
<keyword id="KW-0677">Repeat</keyword>
<sequence>MVDGKEVYISFNRWEDTIRHSFVSHLSAEFQRKGVSVFASEDSASDDRFAEESDAAIAKARVSVVIFSENFASSKGCLNEFLKVSKCRRSKGLVVVPVFYGLTNSIVKKHCLELKKMYPDDKVDEWRNALWDIADLRGGHVSSHKRSDSELVEKIVADVRQKLDRRGRIGVYSRLTKIEYLLCKQPGCIIRSLGIWGMAGIGKTTLARAAYDQLSRDFEASCFIEDFDREFQEKGFFGLLEKQLGVNPQVTRLSILLKTLRSKRILLVLDDVRKPLGATSFLCEFDWLGPGSLIIVTSQDKQVLVQCQVNEIYKVQGLNKHESLQLFSRCAFGKDVPDQNLLELSMKFVDYANGNPLALSICGKNLKGKTPLDMKSVVLELKRHLSDKIFVKLKSSYDALSVSEKEIFLDIVFTFRGANVDNVMQSLAGCGFFPRVGIEALVDKSFVTVSENRVQVNNLIYDVGLKIINDQSDEIGMCYRFVDASNSQSLIEHKEIRESEQGYEDVKAINLDTSNLPFKGHIAFQHMYNLRYLTIYSSINPTKDPDLFLPGDPQFLPPELRLLHWTCYPLHSFPQNFGFQYLVELNMPCSKLKKLWGGTKNLEVLKRITLSCSVQLLNVDELQYSPNIEKIDLKGCLELQSFPDTGQLQHLRIVDLSTCKKIKSFPKVPPSIRKLHLQGTGIRDLSSLNHSSESQRLTRKLENVSSSNQDHRKQVLKLKDSSHLGSLPDIVIFESLEVLDFSGCSELEDIQGFPQNLKRLYLAKTAIKEVPSSLCHHISKLVKLDMENCERLRDLPMGMSNMKYLAVLKLSGCSNLENIKELPRNLKELYLAGTAVKEFPSTLLETLSEVVLLDLENCKKLQGLPTGMSKLEFLVMLKLSGCSKLEIIVDLPLNLIELYLAGTAIRELPPSIGDLALLDTLDLKNCNRLRHLPMEMHNLNPLKVLDLSNCSELEVFTSSLPKVRELRPAPTVMLLRSKLPFCFFIFYEHRVTLSLYKARLQYIPEEIRWMPSLKTLDLSRNGFTEVPVSIKDFSKLLSLRLRYCENLRSLPQLPRSLQLLNAHGCSSLQLITPDFKQLPRYYTFSNCFGLPSHMVSEVLANAPAIVECRKPQQGLENALACSFCLPSPTSRDSKLYLQPGSSTMIILNPKTRSTLVGFAILVEVSFSKDFHDTAGLGFRCVCRWNDKKGHAHKRDNIFHCWAPGEVVPKINDDHMFVFFDLKMHPSILFEGDVFGILADLVVFEIFPVNKQEMHVGDSCTITKCGVYVINDAAGSSSGNTMTPQCSSMDSLKLLDGKGKKRLRVNYAGLKQREKALFLYIACLLGGEKADLLAQFLASTDFVIESTLEDLAGRYLIDISSNGEVMMPPLQRNFSREIIHMLPASTKELVSMASGSPCNRNNDVFVSFHGKDFRKQFISDFLKKLVYKGIRICIGDKILSRSLINKVIKESSIAVVVFSENYASSSLCLLQLMEIMKCWEELGQVVMPIFYKVNPSDIRNQSGHFGKGFKKTCKKTINDERQRWSRALTDAASIAGECSLNWASDADMIEKVANDIRKKLISSKKLGKQIQRVDCDHDNPWETEFNKCIERFFQLPYDGNHDESLVSLTTEKVIDMKQTLKEIYQITKVKLKNNLVGRRHINNICFMHILYEKCEERSSFNPTSLHTLYDNGIPYQVYTKRKKHMSGEEKAPIGGCVGCFYMGQNQGITKAGGGRTMPTAYPAAPQANQGYNAGAQPYPPTAYAV</sequence>
<reference key="1">
    <citation type="journal article" date="1999" name="Nature">
        <title>Sequence and analysis of chromosome 4 of the plant Arabidopsis thaliana.</title>
        <authorList>
            <person name="Mayer K.F.X."/>
            <person name="Schueller C."/>
            <person name="Wambutt R."/>
            <person name="Murphy G."/>
            <person name="Volckaert G."/>
            <person name="Pohl T."/>
            <person name="Duesterhoeft A."/>
            <person name="Stiekema W."/>
            <person name="Entian K.-D."/>
            <person name="Terryn N."/>
            <person name="Harris B."/>
            <person name="Ansorge W."/>
            <person name="Brandt P."/>
            <person name="Grivell L.A."/>
            <person name="Rieger M."/>
            <person name="Weichselgartner M."/>
            <person name="de Simone V."/>
            <person name="Obermaier B."/>
            <person name="Mache R."/>
            <person name="Mueller M."/>
            <person name="Kreis M."/>
            <person name="Delseny M."/>
            <person name="Puigdomenech P."/>
            <person name="Watson M."/>
            <person name="Schmidtheini T."/>
            <person name="Reichert B."/>
            <person name="Portetelle D."/>
            <person name="Perez-Alonso M."/>
            <person name="Boutry M."/>
            <person name="Bancroft I."/>
            <person name="Vos P."/>
            <person name="Hoheisel J."/>
            <person name="Zimmermann W."/>
            <person name="Wedler H."/>
            <person name="Ridley P."/>
            <person name="Langham S.-A."/>
            <person name="McCullagh B."/>
            <person name="Bilham L."/>
            <person name="Robben J."/>
            <person name="van der Schueren J."/>
            <person name="Grymonprez B."/>
            <person name="Chuang Y.-J."/>
            <person name="Vandenbussche F."/>
            <person name="Braeken M."/>
            <person name="Weltjens I."/>
            <person name="Voet M."/>
            <person name="Bastiaens I."/>
            <person name="Aert R."/>
            <person name="Defoor E."/>
            <person name="Weitzenegger T."/>
            <person name="Bothe G."/>
            <person name="Ramsperger U."/>
            <person name="Hilbert H."/>
            <person name="Braun M."/>
            <person name="Holzer E."/>
            <person name="Brandt A."/>
            <person name="Peters S."/>
            <person name="van Staveren M."/>
            <person name="Dirkse W."/>
            <person name="Mooijman P."/>
            <person name="Klein Lankhorst R."/>
            <person name="Rose M."/>
            <person name="Hauf J."/>
            <person name="Koetter P."/>
            <person name="Berneiser S."/>
            <person name="Hempel S."/>
            <person name="Feldpausch M."/>
            <person name="Lamberth S."/>
            <person name="Van den Daele H."/>
            <person name="De Keyser A."/>
            <person name="Buysshaert C."/>
            <person name="Gielen J."/>
            <person name="Villarroel R."/>
            <person name="De Clercq R."/>
            <person name="van Montagu M."/>
            <person name="Rogers J."/>
            <person name="Cronin A."/>
            <person name="Quail M.A."/>
            <person name="Bray-Allen S."/>
            <person name="Clark L."/>
            <person name="Doggett J."/>
            <person name="Hall S."/>
            <person name="Kay M."/>
            <person name="Lennard N."/>
            <person name="McLay K."/>
            <person name="Mayes R."/>
            <person name="Pettett A."/>
            <person name="Rajandream M.A."/>
            <person name="Lyne M."/>
            <person name="Benes V."/>
            <person name="Rechmann S."/>
            <person name="Borkova D."/>
            <person name="Bloecker H."/>
            <person name="Scharfe M."/>
            <person name="Grimm M."/>
            <person name="Loehnert T.-H."/>
            <person name="Dose S."/>
            <person name="de Haan M."/>
            <person name="Maarse A.C."/>
            <person name="Schaefer M."/>
            <person name="Mueller-Auer S."/>
            <person name="Gabel C."/>
            <person name="Fuchs M."/>
            <person name="Fartmann B."/>
            <person name="Granderath K."/>
            <person name="Dauner D."/>
            <person name="Herzl A."/>
            <person name="Neumann S."/>
            <person name="Argiriou A."/>
            <person name="Vitale D."/>
            <person name="Liguori R."/>
            <person name="Piravandi E."/>
            <person name="Massenet O."/>
            <person name="Quigley F."/>
            <person name="Clabauld G."/>
            <person name="Muendlein A."/>
            <person name="Felber R."/>
            <person name="Schnabl S."/>
            <person name="Hiller R."/>
            <person name="Schmidt W."/>
            <person name="Lecharny A."/>
            <person name="Aubourg S."/>
            <person name="Chefdor F."/>
            <person name="Cooke R."/>
            <person name="Berger C."/>
            <person name="Monfort A."/>
            <person name="Casacuberta E."/>
            <person name="Gibbons T."/>
            <person name="Weber N."/>
            <person name="Vandenbol M."/>
            <person name="Bargues M."/>
            <person name="Terol J."/>
            <person name="Torres A."/>
            <person name="Perez-Perez A."/>
            <person name="Purnelle B."/>
            <person name="Bent E."/>
            <person name="Johnson S."/>
            <person name="Tacon D."/>
            <person name="Jesse T."/>
            <person name="Heijnen L."/>
            <person name="Schwarz S."/>
            <person name="Scholler P."/>
            <person name="Heber S."/>
            <person name="Francs P."/>
            <person name="Bielke C."/>
            <person name="Frishman D."/>
            <person name="Haase D."/>
            <person name="Lemcke K."/>
            <person name="Mewes H.-W."/>
            <person name="Stocker S."/>
            <person name="Zaccaria P."/>
            <person name="Bevan M."/>
            <person name="Wilson R.K."/>
            <person name="de la Bastide M."/>
            <person name="Habermann K."/>
            <person name="Parnell L."/>
            <person name="Dedhia N."/>
            <person name="Gnoj L."/>
            <person name="Schutz K."/>
            <person name="Huang E."/>
            <person name="Spiegel L."/>
            <person name="Sekhon M."/>
            <person name="Murray J."/>
            <person name="Sheet P."/>
            <person name="Cordes M."/>
            <person name="Abu-Threideh J."/>
            <person name="Stoneking T."/>
            <person name="Kalicki J."/>
            <person name="Graves T."/>
            <person name="Harmon G."/>
            <person name="Edwards J."/>
            <person name="Latreille P."/>
            <person name="Courtney L."/>
            <person name="Cloud J."/>
            <person name="Abbott A."/>
            <person name="Scott K."/>
            <person name="Johnson D."/>
            <person name="Minx P."/>
            <person name="Bentley D."/>
            <person name="Fulton B."/>
            <person name="Miller N."/>
            <person name="Greco T."/>
            <person name="Kemp K."/>
            <person name="Kramer J."/>
            <person name="Fulton L."/>
            <person name="Mardis E."/>
            <person name="Dante M."/>
            <person name="Pepin K."/>
            <person name="Hillier L.W."/>
            <person name="Nelson J."/>
            <person name="Spieth J."/>
            <person name="Ryan E."/>
            <person name="Andrews S."/>
            <person name="Geisel C."/>
            <person name="Layman D."/>
            <person name="Du H."/>
            <person name="Ali J."/>
            <person name="Berghoff A."/>
            <person name="Jones K."/>
            <person name="Drone K."/>
            <person name="Cotton M."/>
            <person name="Joshu C."/>
            <person name="Antonoiu B."/>
            <person name="Zidanic M."/>
            <person name="Strong C."/>
            <person name="Sun H."/>
            <person name="Lamar B."/>
            <person name="Yordan C."/>
            <person name="Ma P."/>
            <person name="Zhong J."/>
            <person name="Preston R."/>
            <person name="Vil D."/>
            <person name="Shekher M."/>
            <person name="Matero A."/>
            <person name="Shah R."/>
            <person name="Swaby I.K."/>
            <person name="O'Shaughnessy A."/>
            <person name="Rodriguez M."/>
            <person name="Hoffman J."/>
            <person name="Till S."/>
            <person name="Granat S."/>
            <person name="Shohdy N."/>
            <person name="Hasegawa A."/>
            <person name="Hameed A."/>
            <person name="Lodhi M."/>
            <person name="Johnson A."/>
            <person name="Chen E."/>
            <person name="Marra M.A."/>
            <person name="Martienssen R."/>
            <person name="McCombie W.R."/>
        </authorList>
    </citation>
    <scope>NUCLEOTIDE SEQUENCE [LARGE SCALE GENOMIC DNA]</scope>
    <source>
        <strain>cv. Columbia</strain>
    </source>
</reference>
<reference key="2">
    <citation type="journal article" date="2017" name="Plant J.">
        <title>Araport11: a complete reannotation of the Arabidopsis thaliana reference genome.</title>
        <authorList>
            <person name="Cheng C.Y."/>
            <person name="Krishnakumar V."/>
            <person name="Chan A.P."/>
            <person name="Thibaud-Nissen F."/>
            <person name="Schobel S."/>
            <person name="Town C.D."/>
        </authorList>
    </citation>
    <scope>GENOME REANNOTATION</scope>
    <source>
        <strain>cv. Columbia</strain>
    </source>
</reference>
<reference key="3">
    <citation type="journal article" date="2004" name="Plant J.">
        <title>Two TIR:NB:LRR genes are required to specify resistance to Peronospora parasitica isolate Cala2 in Arabidopsis.</title>
        <authorList>
            <person name="Sinapidou E."/>
            <person name="Williams K."/>
            <person name="Nott L."/>
            <person name="Bahkt S."/>
            <person name="Toer M."/>
            <person name="Crute I."/>
            <person name="Bittner-Eddy P."/>
            <person name="Beynon J."/>
        </authorList>
    </citation>
    <scope>IDENTIFICATION</scope>
    <scope>FUNCTION</scope>
</reference>
<proteinExistence type="inferred from homology"/>